<sequence>MLIKSEYKPRMLPKEEQVKKPMTSNGRISFVLMAIAVLFAGLIARGLYLQTVTYNFLKEQGDNRIVRTQTLPATRGTVSDRNGAVLALSAPTESLFAVPKEMKEMPSAAQLERLSELVDVPVDVLRNKLEQKGKSFIWIKRQLDPKVAEEVKALGLENFVFEKELKRHYPMGNLFAHVIGFTDIDGKGQEGLELSLEDSLHGEDGAEVVLRDRQGNIVDSLDSPRNKAPKNGKDIILSLDQRIQTLAYEELNKAVEYHQAKAGTVVVLDARTGEILALANTPAYDPNRPGRADSEQRRNRAVTDMIEPGSAIKPFVIAKALDAGKTDLNERLNTQPYKIGPSPVRDTHVYPSLDVRGIMQKSSNVGTSKLSARFGAEEMYDFYHELGIGVRMHSGFPGETAGLLRNWRRWRPIEQATMSFGYGLQLSLLQLARAYTALTHDGVLLPVSFEKQAVAPQGKRIFKESTAREVRNLMVSVTEPGGTGTAGAVDGFDVGAKTGTARKFVNGRYADNKHIATFIGFAPAKNPRVIVAVTIDEPTAHGYYGGVVAGPPFKKIMGGSLNILGISPTKPLTAAAVKTPS</sequence>
<feature type="chain" id="PRO_0000195451" description="Probable peptidoglycan D,D-transpeptidase PenA">
    <location>
        <begin position="1"/>
        <end position="581"/>
    </location>
</feature>
<feature type="transmembrane region" description="Helical" evidence="1">
    <location>
        <begin position="28"/>
        <end position="48"/>
    </location>
</feature>
<feature type="active site" description="Acyl-ester intermediate" evidence="1">
    <location>
        <position position="310"/>
    </location>
</feature>
<reference key="1">
    <citation type="journal article" date="2000" name="Nature">
        <title>Complete DNA sequence of a serogroup A strain of Neisseria meningitidis Z2491.</title>
        <authorList>
            <person name="Parkhill J."/>
            <person name="Achtman M."/>
            <person name="James K.D."/>
            <person name="Bentley S.D."/>
            <person name="Churcher C.M."/>
            <person name="Klee S.R."/>
            <person name="Morelli G."/>
            <person name="Basham D."/>
            <person name="Brown D."/>
            <person name="Chillingworth T."/>
            <person name="Davies R.M."/>
            <person name="Davis P."/>
            <person name="Devlin K."/>
            <person name="Feltwell T."/>
            <person name="Hamlin N."/>
            <person name="Holroyd S."/>
            <person name="Jagels K."/>
            <person name="Leather S."/>
            <person name="Moule S."/>
            <person name="Mungall K.L."/>
            <person name="Quail M.A."/>
            <person name="Rajandream M.A."/>
            <person name="Rutherford K.M."/>
            <person name="Simmonds M."/>
            <person name="Skelton J."/>
            <person name="Whitehead S."/>
            <person name="Spratt B.G."/>
            <person name="Barrell B.G."/>
        </authorList>
    </citation>
    <scope>NUCLEOTIDE SEQUENCE [LARGE SCALE GENOMIC DNA]</scope>
    <source>
        <strain>DSM 15465 / Z2491</strain>
    </source>
</reference>
<accession>P0A0U8</accession>
<accession>A1ITQ6</accession>
<accession>P11882</accession>
<protein>
    <recommendedName>
        <fullName evidence="1">Probable peptidoglycan D,D-transpeptidase PenA</fullName>
        <ecNumber evidence="1">3.4.16.4</ecNumber>
    </recommendedName>
    <alternativeName>
        <fullName evidence="1">Penicillin-binding protein 2</fullName>
        <shortName evidence="1">PBP-2</shortName>
    </alternativeName>
</protein>
<proteinExistence type="inferred from homology"/>
<dbReference type="EC" id="3.4.16.4" evidence="1"/>
<dbReference type="EMBL" id="AL157959">
    <property type="protein sequence ID" value="CAM09174.1"/>
    <property type="molecule type" value="Genomic_DNA"/>
</dbReference>
<dbReference type="PIR" id="S04857">
    <property type="entry name" value="S04857"/>
</dbReference>
<dbReference type="RefSeq" id="WP_002218783.1">
    <property type="nucleotide sequence ID" value="NC_003116.1"/>
</dbReference>
<dbReference type="SMR" id="P0A0U8"/>
<dbReference type="EnsemblBacteria" id="CAM09174">
    <property type="protein sequence ID" value="CAM09174"/>
    <property type="gene ID" value="NMA2072"/>
</dbReference>
<dbReference type="KEGG" id="nma:NMA2072"/>
<dbReference type="HOGENOM" id="CLU_009289_6_2_4"/>
<dbReference type="UniPathway" id="UPA00219"/>
<dbReference type="Proteomes" id="UP000000626">
    <property type="component" value="Chromosome"/>
</dbReference>
<dbReference type="GO" id="GO:0005886">
    <property type="term" value="C:plasma membrane"/>
    <property type="evidence" value="ECO:0007669"/>
    <property type="project" value="UniProtKB-SubCell"/>
</dbReference>
<dbReference type="GO" id="GO:0008658">
    <property type="term" value="F:penicillin binding"/>
    <property type="evidence" value="ECO:0007669"/>
    <property type="project" value="InterPro"/>
</dbReference>
<dbReference type="GO" id="GO:0008955">
    <property type="term" value="F:peptidoglycan glycosyltransferase activity"/>
    <property type="evidence" value="ECO:0007669"/>
    <property type="project" value="InterPro"/>
</dbReference>
<dbReference type="GO" id="GO:0009002">
    <property type="term" value="F:serine-type D-Ala-D-Ala carboxypeptidase activity"/>
    <property type="evidence" value="ECO:0007669"/>
    <property type="project" value="UniProtKB-UniRule"/>
</dbReference>
<dbReference type="GO" id="GO:0071555">
    <property type="term" value="P:cell wall organization"/>
    <property type="evidence" value="ECO:0007669"/>
    <property type="project" value="UniProtKB-KW"/>
</dbReference>
<dbReference type="GO" id="GO:0000917">
    <property type="term" value="P:division septum assembly"/>
    <property type="evidence" value="ECO:0007669"/>
    <property type="project" value="UniProtKB-KW"/>
</dbReference>
<dbReference type="GO" id="GO:0043093">
    <property type="term" value="P:FtsZ-dependent cytokinesis"/>
    <property type="evidence" value="ECO:0007669"/>
    <property type="project" value="UniProtKB-UniRule"/>
</dbReference>
<dbReference type="GO" id="GO:0009252">
    <property type="term" value="P:peptidoglycan biosynthetic process"/>
    <property type="evidence" value="ECO:0007669"/>
    <property type="project" value="UniProtKB-UniRule"/>
</dbReference>
<dbReference type="GO" id="GO:0006508">
    <property type="term" value="P:proteolysis"/>
    <property type="evidence" value="ECO:0007669"/>
    <property type="project" value="UniProtKB-KW"/>
</dbReference>
<dbReference type="GO" id="GO:0008360">
    <property type="term" value="P:regulation of cell shape"/>
    <property type="evidence" value="ECO:0007669"/>
    <property type="project" value="UniProtKB-KW"/>
</dbReference>
<dbReference type="GO" id="GO:0046677">
    <property type="term" value="P:response to antibiotic"/>
    <property type="evidence" value="ECO:0007669"/>
    <property type="project" value="UniProtKB-KW"/>
</dbReference>
<dbReference type="Gene3D" id="1.10.150.770">
    <property type="match status" value="1"/>
</dbReference>
<dbReference type="Gene3D" id="3.30.450.330">
    <property type="match status" value="1"/>
</dbReference>
<dbReference type="Gene3D" id="3.40.710.10">
    <property type="entry name" value="DD-peptidase/beta-lactamase superfamily"/>
    <property type="match status" value="1"/>
</dbReference>
<dbReference type="Gene3D" id="3.90.1310.10">
    <property type="entry name" value="Penicillin-binding protein 2a (Domain 2)"/>
    <property type="match status" value="1"/>
</dbReference>
<dbReference type="HAMAP" id="MF_02080">
    <property type="entry name" value="FtsI_transpept"/>
    <property type="match status" value="1"/>
</dbReference>
<dbReference type="InterPro" id="IPR050515">
    <property type="entry name" value="Bact_Transpept/Beta-Lactamase"/>
</dbReference>
<dbReference type="InterPro" id="IPR012338">
    <property type="entry name" value="Beta-lactam/transpept-like"/>
</dbReference>
<dbReference type="InterPro" id="IPR037532">
    <property type="entry name" value="FtsI_transpept"/>
</dbReference>
<dbReference type="InterPro" id="IPR005311">
    <property type="entry name" value="PBP_dimer"/>
</dbReference>
<dbReference type="InterPro" id="IPR036138">
    <property type="entry name" value="PBP_dimer_sf"/>
</dbReference>
<dbReference type="InterPro" id="IPR001460">
    <property type="entry name" value="PCN-bd_Tpept"/>
</dbReference>
<dbReference type="PANTHER" id="PTHR30627">
    <property type="entry name" value="PEPTIDOGLYCAN D,D-TRANSPEPTIDASE"/>
    <property type="match status" value="1"/>
</dbReference>
<dbReference type="PANTHER" id="PTHR30627:SF1">
    <property type="entry name" value="PEPTIDOGLYCAN D,D-TRANSPEPTIDASE FTSI"/>
    <property type="match status" value="1"/>
</dbReference>
<dbReference type="Pfam" id="PF03717">
    <property type="entry name" value="PBP_dimer"/>
    <property type="match status" value="1"/>
</dbReference>
<dbReference type="Pfam" id="PF00905">
    <property type="entry name" value="Transpeptidase"/>
    <property type="match status" value="1"/>
</dbReference>
<dbReference type="SUPFAM" id="SSF56601">
    <property type="entry name" value="beta-lactamase/transpeptidase-like"/>
    <property type="match status" value="1"/>
</dbReference>
<dbReference type="SUPFAM" id="SSF56519">
    <property type="entry name" value="Penicillin binding protein dimerisation domain"/>
    <property type="match status" value="1"/>
</dbReference>
<name>PBP2_NEIMA</name>
<organism>
    <name type="scientific">Neisseria meningitidis serogroup A / serotype 4A (strain DSM 15465 / Z2491)</name>
    <dbReference type="NCBI Taxonomy" id="122587"/>
    <lineage>
        <taxon>Bacteria</taxon>
        <taxon>Pseudomonadati</taxon>
        <taxon>Pseudomonadota</taxon>
        <taxon>Betaproteobacteria</taxon>
        <taxon>Neisseriales</taxon>
        <taxon>Neisseriaceae</taxon>
        <taxon>Neisseria</taxon>
    </lineage>
</organism>
<comment type="function">
    <text evidence="1">Catalyzes cross-linking of the peptidoglycan cell wall at the division septum.</text>
</comment>
<comment type="catalytic activity">
    <reaction evidence="1">
        <text>Preferential cleavage: (Ac)2-L-Lys-D-Ala-|-D-Ala. Also transpeptidation of peptidyl-alanyl moieties that are N-acyl substituents of D-alanine.</text>
        <dbReference type="EC" id="3.4.16.4"/>
    </reaction>
</comment>
<comment type="pathway">
    <text evidence="1">Cell wall biogenesis; peptidoglycan biosynthesis.</text>
</comment>
<comment type="subcellular location">
    <subcellularLocation>
        <location evidence="1">Cell inner membrane</location>
        <topology evidence="1">Single-pass membrane protein</topology>
    </subcellularLocation>
</comment>
<comment type="similarity">
    <text evidence="1">Belongs to the transpeptidase family. FtsI subfamily.</text>
</comment>
<keyword id="KW-0046">Antibiotic resistance</keyword>
<keyword id="KW-0121">Carboxypeptidase</keyword>
<keyword id="KW-0131">Cell cycle</keyword>
<keyword id="KW-0132">Cell division</keyword>
<keyword id="KW-0997">Cell inner membrane</keyword>
<keyword id="KW-1003">Cell membrane</keyword>
<keyword id="KW-0133">Cell shape</keyword>
<keyword id="KW-0961">Cell wall biogenesis/degradation</keyword>
<keyword id="KW-0378">Hydrolase</keyword>
<keyword id="KW-0472">Membrane</keyword>
<keyword id="KW-0573">Peptidoglycan synthesis</keyword>
<keyword id="KW-0645">Protease</keyword>
<keyword id="KW-0717">Septation</keyword>
<keyword id="KW-0812">Transmembrane</keyword>
<keyword id="KW-1133">Transmembrane helix</keyword>
<gene>
    <name evidence="1" type="primary">penA</name>
    <name type="ordered locus">NMA2072</name>
</gene>
<evidence type="ECO:0000255" key="1">
    <source>
        <dbReference type="HAMAP-Rule" id="MF_02080"/>
    </source>
</evidence>